<proteinExistence type="inferred from homology"/>
<feature type="chain" id="PRO_0000160156" description="Glucosamine-6-phosphate deaminase">
    <location>
        <begin position="1"/>
        <end position="256"/>
    </location>
</feature>
<feature type="active site" description="Proton acceptor; for enolization step" evidence="1">
    <location>
        <position position="68"/>
    </location>
</feature>
<feature type="active site" description="For ring-opening step" evidence="1">
    <location>
        <position position="137"/>
    </location>
</feature>
<feature type="active site" description="Proton acceptor; for ring-opening step" evidence="1">
    <location>
        <position position="139"/>
    </location>
</feature>
<feature type="active site" description="For ring-opening step" evidence="1">
    <location>
        <position position="144"/>
    </location>
</feature>
<organism>
    <name type="scientific">Mycoplasmopsis pulmonis (strain UAB CTIP)</name>
    <name type="common">Mycoplasma pulmonis</name>
    <dbReference type="NCBI Taxonomy" id="272635"/>
    <lineage>
        <taxon>Bacteria</taxon>
        <taxon>Bacillati</taxon>
        <taxon>Mycoplasmatota</taxon>
        <taxon>Mycoplasmoidales</taxon>
        <taxon>Metamycoplasmataceae</taxon>
        <taxon>Mycoplasmopsis</taxon>
    </lineage>
</organism>
<gene>
    <name evidence="1" type="primary">nagB</name>
    <name type="ordered locus">MYPU_3620</name>
</gene>
<sequence>MREIYIFKDLQDLHKFSAKQIIDQIKIKKDSTLGFATGKTPLKTYQLLVKDHQENKTSWKDITSFNLDEFVDIDPSHPESFIKQMKSNLFDHLDINEQKINIPKSNSSNPDQEALNYENKIRKNNGIDLQFISIGVNGHIAYNEPGTPKDSLTHVSNLTKETILDLIAKNKFSSIDEVPKKAITMGVKTILNQCKKIMMVSFGKEKAQVTKQMLEDKPNENVTASFLQEHPNCIYILDKEAASLLNEETLKKAKWI</sequence>
<comment type="function">
    <text evidence="1">Catalyzes the reversible isomerization-deamination of glucosamine 6-phosphate (GlcN6P) to form fructose 6-phosphate (Fru6P) and ammonium ion.</text>
</comment>
<comment type="catalytic activity">
    <reaction evidence="1">
        <text>alpha-D-glucosamine 6-phosphate + H2O = beta-D-fructose 6-phosphate + NH4(+)</text>
        <dbReference type="Rhea" id="RHEA:12172"/>
        <dbReference type="ChEBI" id="CHEBI:15377"/>
        <dbReference type="ChEBI" id="CHEBI:28938"/>
        <dbReference type="ChEBI" id="CHEBI:57634"/>
        <dbReference type="ChEBI" id="CHEBI:75989"/>
        <dbReference type="EC" id="3.5.99.6"/>
    </reaction>
</comment>
<comment type="pathway">
    <text evidence="1">Amino-sugar metabolism; N-acetylneuraminate degradation; D-fructose 6-phosphate from N-acetylneuraminate: step 5/5.</text>
</comment>
<comment type="similarity">
    <text evidence="1">Belongs to the glucosamine/galactosamine-6-phosphate isomerase family. NagB subfamily.</text>
</comment>
<accession>Q98QJ9</accession>
<keyword id="KW-0119">Carbohydrate metabolism</keyword>
<keyword id="KW-0378">Hydrolase</keyword>
<keyword id="KW-1185">Reference proteome</keyword>
<reference key="1">
    <citation type="journal article" date="2001" name="Nucleic Acids Res.">
        <title>The complete genome sequence of the murine respiratory pathogen Mycoplasma pulmonis.</title>
        <authorList>
            <person name="Chambaud I."/>
            <person name="Heilig R."/>
            <person name="Ferris S."/>
            <person name="Barbe V."/>
            <person name="Samson D."/>
            <person name="Galisson F."/>
            <person name="Moszer I."/>
            <person name="Dybvig K."/>
            <person name="Wroblewski H."/>
            <person name="Viari A."/>
            <person name="Rocha E.P.C."/>
            <person name="Blanchard A."/>
        </authorList>
    </citation>
    <scope>NUCLEOTIDE SEQUENCE [LARGE SCALE GENOMIC DNA]</scope>
    <source>
        <strain>UAB CTIP</strain>
    </source>
</reference>
<name>NAGB_MYCPU</name>
<protein>
    <recommendedName>
        <fullName evidence="1">Glucosamine-6-phosphate deaminase</fullName>
        <ecNumber evidence="1">3.5.99.6</ecNumber>
    </recommendedName>
    <alternativeName>
        <fullName evidence="1">GlcN6P deaminase</fullName>
        <shortName evidence="1">GNPDA</shortName>
    </alternativeName>
    <alternativeName>
        <fullName evidence="1">Glucosamine-6-phosphate isomerase</fullName>
    </alternativeName>
</protein>
<dbReference type="EC" id="3.5.99.6" evidence="1"/>
<dbReference type="EMBL" id="AL445564">
    <property type="protein sequence ID" value="CAC13535.1"/>
    <property type="molecule type" value="Genomic_DNA"/>
</dbReference>
<dbReference type="PIR" id="B90557">
    <property type="entry name" value="B90557"/>
</dbReference>
<dbReference type="RefSeq" id="WP_010925166.1">
    <property type="nucleotide sequence ID" value="NC_002771.1"/>
</dbReference>
<dbReference type="SMR" id="Q98QJ9"/>
<dbReference type="STRING" id="272635.gene:17576962"/>
<dbReference type="KEGG" id="mpu:MYPU_3620"/>
<dbReference type="eggNOG" id="COG0363">
    <property type="taxonomic scope" value="Bacteria"/>
</dbReference>
<dbReference type="HOGENOM" id="CLU_049611_1_1_14"/>
<dbReference type="BioCyc" id="MPUL272635:G1GT6-370-MONOMER"/>
<dbReference type="UniPathway" id="UPA00629">
    <property type="reaction ID" value="UER00684"/>
</dbReference>
<dbReference type="Proteomes" id="UP000000528">
    <property type="component" value="Chromosome"/>
</dbReference>
<dbReference type="GO" id="GO:0005737">
    <property type="term" value="C:cytoplasm"/>
    <property type="evidence" value="ECO:0007669"/>
    <property type="project" value="TreeGrafter"/>
</dbReference>
<dbReference type="GO" id="GO:0004342">
    <property type="term" value="F:glucosamine-6-phosphate deaminase activity"/>
    <property type="evidence" value="ECO:0007669"/>
    <property type="project" value="UniProtKB-UniRule"/>
</dbReference>
<dbReference type="GO" id="GO:0042802">
    <property type="term" value="F:identical protein binding"/>
    <property type="evidence" value="ECO:0007669"/>
    <property type="project" value="TreeGrafter"/>
</dbReference>
<dbReference type="GO" id="GO:0005975">
    <property type="term" value="P:carbohydrate metabolic process"/>
    <property type="evidence" value="ECO:0007669"/>
    <property type="project" value="InterPro"/>
</dbReference>
<dbReference type="GO" id="GO:0006043">
    <property type="term" value="P:glucosamine catabolic process"/>
    <property type="evidence" value="ECO:0007669"/>
    <property type="project" value="TreeGrafter"/>
</dbReference>
<dbReference type="GO" id="GO:0006046">
    <property type="term" value="P:N-acetylglucosamine catabolic process"/>
    <property type="evidence" value="ECO:0007669"/>
    <property type="project" value="TreeGrafter"/>
</dbReference>
<dbReference type="GO" id="GO:0019262">
    <property type="term" value="P:N-acetylneuraminate catabolic process"/>
    <property type="evidence" value="ECO:0007669"/>
    <property type="project" value="UniProtKB-UniRule"/>
</dbReference>
<dbReference type="CDD" id="cd01399">
    <property type="entry name" value="GlcN6P_deaminase"/>
    <property type="match status" value="1"/>
</dbReference>
<dbReference type="Gene3D" id="3.40.50.1360">
    <property type="match status" value="1"/>
</dbReference>
<dbReference type="HAMAP" id="MF_01241">
    <property type="entry name" value="GlcN6P_deamin"/>
    <property type="match status" value="1"/>
</dbReference>
<dbReference type="InterPro" id="IPR006148">
    <property type="entry name" value="Glc/Gal-6P_isomerase"/>
</dbReference>
<dbReference type="InterPro" id="IPR004547">
    <property type="entry name" value="Glucosamine6P_isomerase"/>
</dbReference>
<dbReference type="InterPro" id="IPR018321">
    <property type="entry name" value="Glucosamine6P_isomerase_CS"/>
</dbReference>
<dbReference type="InterPro" id="IPR037171">
    <property type="entry name" value="NagB/RpiA_transferase-like"/>
</dbReference>
<dbReference type="NCBIfam" id="TIGR00502">
    <property type="entry name" value="nagB"/>
    <property type="match status" value="1"/>
</dbReference>
<dbReference type="PANTHER" id="PTHR11280">
    <property type="entry name" value="GLUCOSAMINE-6-PHOSPHATE ISOMERASE"/>
    <property type="match status" value="1"/>
</dbReference>
<dbReference type="PANTHER" id="PTHR11280:SF5">
    <property type="entry name" value="GLUCOSAMINE-6-PHOSPHATE ISOMERASE"/>
    <property type="match status" value="1"/>
</dbReference>
<dbReference type="Pfam" id="PF01182">
    <property type="entry name" value="Glucosamine_iso"/>
    <property type="match status" value="1"/>
</dbReference>
<dbReference type="SUPFAM" id="SSF100950">
    <property type="entry name" value="NagB/RpiA/CoA transferase-like"/>
    <property type="match status" value="1"/>
</dbReference>
<dbReference type="PROSITE" id="PS01161">
    <property type="entry name" value="GLC_GALNAC_ISOMERASE"/>
    <property type="match status" value="1"/>
</dbReference>
<evidence type="ECO:0000255" key="1">
    <source>
        <dbReference type="HAMAP-Rule" id="MF_01241"/>
    </source>
</evidence>